<organism>
    <name type="scientific">Aspergillus flavus (strain ATCC 200026 / FGSC A1120 / IAM 13836 / NRRL 3357 / JCM 12722 / SRRC 167)</name>
    <dbReference type="NCBI Taxonomy" id="332952"/>
    <lineage>
        <taxon>Eukaryota</taxon>
        <taxon>Fungi</taxon>
        <taxon>Dikarya</taxon>
        <taxon>Ascomycota</taxon>
        <taxon>Pezizomycotina</taxon>
        <taxon>Eurotiomycetes</taxon>
        <taxon>Eurotiomycetidae</taxon>
        <taxon>Eurotiales</taxon>
        <taxon>Aspergillaceae</taxon>
        <taxon>Aspergillus</taxon>
        <taxon>Aspergillus subgen. Circumdati</taxon>
    </lineage>
</organism>
<dbReference type="EC" id="2.1.1.-" evidence="6"/>
<dbReference type="EMBL" id="EQ963475">
    <property type="protein sequence ID" value="EED53480.1"/>
    <property type="molecule type" value="Genomic_DNA"/>
</dbReference>
<dbReference type="RefSeq" id="XP_002376726.1">
    <property type="nucleotide sequence ID" value="XM_002376685.1"/>
</dbReference>
<dbReference type="SMR" id="B8N8R1"/>
<dbReference type="EnsemblFungi" id="EED53480">
    <property type="protein sequence ID" value="EED53480"/>
    <property type="gene ID" value="AFLA_108560"/>
</dbReference>
<dbReference type="VEuPathDB" id="FungiDB:AFLA_006788"/>
<dbReference type="eggNOG" id="KOG3178">
    <property type="taxonomic scope" value="Eukaryota"/>
</dbReference>
<dbReference type="HOGENOM" id="CLU_005533_5_2_1"/>
<dbReference type="OMA" id="HMPAHLK"/>
<dbReference type="GO" id="GO:0008171">
    <property type="term" value="F:O-methyltransferase activity"/>
    <property type="evidence" value="ECO:0007669"/>
    <property type="project" value="InterPro"/>
</dbReference>
<dbReference type="GO" id="GO:0032259">
    <property type="term" value="P:methylation"/>
    <property type="evidence" value="ECO:0007669"/>
    <property type="project" value="UniProtKB-KW"/>
</dbReference>
<dbReference type="GO" id="GO:0044550">
    <property type="term" value="P:secondary metabolite biosynthetic process"/>
    <property type="evidence" value="ECO:0007669"/>
    <property type="project" value="UniProtKB-ARBA"/>
</dbReference>
<dbReference type="Gene3D" id="3.40.50.150">
    <property type="entry name" value="Vaccinia Virus protein VP39"/>
    <property type="match status" value="1"/>
</dbReference>
<dbReference type="Gene3D" id="1.10.10.10">
    <property type="entry name" value="Winged helix-like DNA-binding domain superfamily/Winged helix DNA-binding domain"/>
    <property type="match status" value="1"/>
</dbReference>
<dbReference type="InterPro" id="IPR016461">
    <property type="entry name" value="COMT-like"/>
</dbReference>
<dbReference type="InterPro" id="IPR001077">
    <property type="entry name" value="O_MeTrfase_dom"/>
</dbReference>
<dbReference type="InterPro" id="IPR029063">
    <property type="entry name" value="SAM-dependent_MTases_sf"/>
</dbReference>
<dbReference type="InterPro" id="IPR036388">
    <property type="entry name" value="WH-like_DNA-bd_sf"/>
</dbReference>
<dbReference type="InterPro" id="IPR036390">
    <property type="entry name" value="WH_DNA-bd_sf"/>
</dbReference>
<dbReference type="PANTHER" id="PTHR43712:SF1">
    <property type="entry name" value="HYPOTHETICAL O-METHYLTRANSFERASE (EUROFUNG)-RELATED"/>
    <property type="match status" value="1"/>
</dbReference>
<dbReference type="PANTHER" id="PTHR43712">
    <property type="entry name" value="PUTATIVE (AFU_ORTHOLOGUE AFUA_4G14580)-RELATED"/>
    <property type="match status" value="1"/>
</dbReference>
<dbReference type="Pfam" id="PF00891">
    <property type="entry name" value="Methyltransf_2"/>
    <property type="match status" value="1"/>
</dbReference>
<dbReference type="SUPFAM" id="SSF53335">
    <property type="entry name" value="S-adenosyl-L-methionine-dependent methyltransferases"/>
    <property type="match status" value="1"/>
</dbReference>
<dbReference type="SUPFAM" id="SSF46785">
    <property type="entry name" value="Winged helix' DNA-binding domain"/>
    <property type="match status" value="1"/>
</dbReference>
<dbReference type="PROSITE" id="PS51683">
    <property type="entry name" value="SAM_OMT_II"/>
    <property type="match status" value="1"/>
</dbReference>
<reference key="1">
    <citation type="journal article" date="2015" name="Genome Announc.">
        <title>Genome sequence of Aspergillus flavus NRRL 3357, a strain that causes aflatoxin contamination of food and feed.</title>
        <authorList>
            <person name="Nierman W.C."/>
            <person name="Yu J."/>
            <person name="Fedorova-Abrams N.D."/>
            <person name="Losada L."/>
            <person name="Cleveland T.E."/>
            <person name="Bhatnagar D."/>
            <person name="Bennett J.W."/>
            <person name="Dean R."/>
            <person name="Payne G.A."/>
        </authorList>
    </citation>
    <scope>NUCLEOTIDE SEQUENCE [LARGE SCALE GENOMIC DNA]</scope>
    <source>
        <strain>ATCC 200026 / FGSC A1120 / IAM 13836 / NRRL 3357 / JCM 12722 / SRRC 167</strain>
    </source>
</reference>
<reference key="2">
    <citation type="journal article" date="1992" name="J. Nat. Prod.">
        <title>Aflavarin and beta-aflatrem: new anti-insectan metabolites from the sclerotia of Aspergillus flavus.</title>
        <authorList>
            <person name="TePaske M.R."/>
            <person name="Gloer J.B."/>
            <person name="Wicklow D.T."/>
            <person name="Dowd P.F."/>
        </authorList>
    </citation>
    <scope>FUNCTION</scope>
</reference>
<reference key="3">
    <citation type="journal article" date="2015" name="Eukaryot. Cell">
        <title>Transcriptome analysis of Aspergillus flavus reveals veA-dependent regulation of secondary metabolite gene clusters, including the novel aflavarin cluster.</title>
        <authorList>
            <person name="Cary J.W."/>
            <person name="Han Z."/>
            <person name="Yin Y."/>
            <person name="Lohmar J.M."/>
            <person name="Shantappa S."/>
            <person name="Harris-Coward P.Y."/>
            <person name="Mack B."/>
            <person name="Ehrlich K.C."/>
            <person name="Wei Q."/>
            <person name="Arroyo-Manzanares N."/>
            <person name="Uka V."/>
            <person name="Vanhaecke L."/>
            <person name="Bhatnagar D."/>
            <person name="Yu J."/>
            <person name="Nierman W.C."/>
            <person name="Johns M.A."/>
            <person name="Sorensen D."/>
            <person name="Shen H."/>
            <person name="De Saeger S."/>
            <person name="Diana Di Mavungu J."/>
            <person name="Calvo A.M."/>
        </authorList>
    </citation>
    <scope>FUNCTION</scope>
    <scope>DISRUPTION PHENOTYPE</scope>
</reference>
<gene>
    <name evidence="5" type="primary">afvC</name>
    <name type="ORF">AFLA_108560</name>
</gene>
<feature type="chain" id="PRO_0000436113" description="O-methyltransferase afvC">
    <location>
        <begin position="1"/>
        <end position="410"/>
    </location>
</feature>
<feature type="active site" description="Proton acceptor" evidence="2">
    <location>
        <position position="319"/>
    </location>
</feature>
<feature type="binding site" evidence="1">
    <location>
        <begin position="253"/>
        <end position="254"/>
    </location>
    <ligand>
        <name>S-adenosyl-L-methionine</name>
        <dbReference type="ChEBI" id="CHEBI:59789"/>
    </ligand>
</feature>
<feature type="binding site" evidence="1">
    <location>
        <position position="278"/>
    </location>
    <ligand>
        <name>S-adenosyl-L-methionine</name>
        <dbReference type="ChEBI" id="CHEBI:59789"/>
    </ligand>
</feature>
<feature type="binding site" evidence="1">
    <location>
        <begin position="299"/>
        <end position="300"/>
    </location>
    <ligand>
        <name>S-adenosyl-L-methionine</name>
        <dbReference type="ChEBI" id="CHEBI:59789"/>
    </ligand>
</feature>
<feature type="binding site" evidence="1">
    <location>
        <position position="315"/>
    </location>
    <ligand>
        <name>S-adenosyl-L-methionine</name>
        <dbReference type="ChEBI" id="CHEBI:59789"/>
    </ligand>
</feature>
<proteinExistence type="evidence at transcript level"/>
<protein>
    <recommendedName>
        <fullName evidence="5">O-methyltransferase afvC</fullName>
        <ecNumber evidence="6">2.1.1.-</ecNumber>
    </recommendedName>
    <alternativeName>
        <fullName evidence="5">Aflavarin synthesis protein C</fullName>
    </alternativeName>
</protein>
<sequence>MEVSEERDLYLHSITAALERLNSAASECQSRLLSEHDGSIEDHSANQTAHDNLVQEAYKFLQIAQGPIDTVATCFERTAHVACARSLLEMGAFEGLPIGGESRSTKELAEDLSVDEALLARLMRNSALFEETGPNQYRHTPFSEAYLRPEIRAMFRFAMDEHMPAHLKMHEFLKSNSWTEPTSTSNNPYTYAHDTNGKSMWEYLSERPTRMASFNDGMTLQAMTELWMIDLFPWESLSDQQPTPTTVVAVDIGGGTGMGISRIRSYCCSLPGKFILQDQAHVIQSADPRGNGIEKMAYDFFEEQPIRGALTYLIRRCLHNWPQESIIQILKNVAAAMQPEKSRLLIEEIIVPDMNAGIEEGWMDMIMMNLGAKQRTLKEWEEVLALAGFEVRKIYQIPGNCHGLLEVWLK</sequence>
<evidence type="ECO:0000250" key="1">
    <source>
        <dbReference type="UniProtKB" id="O04385"/>
    </source>
</evidence>
<evidence type="ECO:0000255" key="2">
    <source>
        <dbReference type="PROSITE-ProRule" id="PRU01020"/>
    </source>
</evidence>
<evidence type="ECO:0000269" key="3">
    <source>
    </source>
</evidence>
<evidence type="ECO:0000269" key="4">
    <source ref="2"/>
</evidence>
<evidence type="ECO:0000303" key="5">
    <source>
    </source>
</evidence>
<evidence type="ECO:0000305" key="6">
    <source>
    </source>
</evidence>
<name>AFVC_ASPFN</name>
<keyword id="KW-0489">Methyltransferase</keyword>
<keyword id="KW-0949">S-adenosyl-L-methionine</keyword>
<keyword id="KW-0808">Transferase</keyword>
<comment type="function">
    <text evidence="3 4">O-methyltransferase; part of the gene cluster that mediates the biosynthesis of aflavarin, a bicoumarin that exhibits anti-insectan activity against the fungivorous beetle C.hemipterus (PubMed:26209694, Ref.2).</text>
</comment>
<comment type="pathway">
    <text evidence="6">Secondary metabolite biosynthesis.</text>
</comment>
<comment type="induction">
    <text evidence="3">Expression is induced by the developmental and secondary metabolism regulator veA (PubMed:26209694).</text>
</comment>
<comment type="disruption phenotype">
    <text evidence="3">Fails to produce aflavarin (PubMed:26209694).</text>
</comment>
<comment type="similarity">
    <text evidence="2">Belongs to the class I-like SAM-binding methyltransferase superfamily. Cation-independent O-methyltransferase family. COMT subfamily.</text>
</comment>
<accession>B8N8R1</accession>